<reference key="1">
    <citation type="journal article" date="2005" name="Gene">
        <title>The first complete chloroplast genome sequence of a lycophyte, Huperzia lucidula (Lycopodiaceae).</title>
        <authorList>
            <person name="Wolf P.G."/>
            <person name="Karol K.G."/>
            <person name="Mandoli D.F."/>
            <person name="Kuehl J.V."/>
            <person name="Arumuganathan K."/>
            <person name="Ellis M.W."/>
            <person name="Mishler B.D."/>
            <person name="Kelch D.G."/>
            <person name="Olmstead R.G."/>
            <person name="Boore J.L."/>
        </authorList>
    </citation>
    <scope>NUCLEOTIDE SEQUENCE [LARGE SCALE GENOMIC DNA]</scope>
</reference>
<dbReference type="EMBL" id="AY660566">
    <property type="protein sequence ID" value="AAT80682.1"/>
    <property type="molecule type" value="Genomic_DNA"/>
</dbReference>
<dbReference type="RefSeq" id="YP_209486.1">
    <property type="nucleotide sequence ID" value="NC_006861.1"/>
</dbReference>
<dbReference type="SMR" id="Q5SD14"/>
<dbReference type="GeneID" id="3283779"/>
<dbReference type="GO" id="GO:0009507">
    <property type="term" value="C:chloroplast"/>
    <property type="evidence" value="ECO:0007669"/>
    <property type="project" value="UniProtKB-SubCell"/>
</dbReference>
<dbReference type="GO" id="GO:1990904">
    <property type="term" value="C:ribonucleoprotein complex"/>
    <property type="evidence" value="ECO:0007669"/>
    <property type="project" value="UniProtKB-KW"/>
</dbReference>
<dbReference type="GO" id="GO:0005840">
    <property type="term" value="C:ribosome"/>
    <property type="evidence" value="ECO:0007669"/>
    <property type="project" value="UniProtKB-KW"/>
</dbReference>
<dbReference type="GO" id="GO:0019843">
    <property type="term" value="F:rRNA binding"/>
    <property type="evidence" value="ECO:0007669"/>
    <property type="project" value="UniProtKB-UniRule"/>
</dbReference>
<dbReference type="GO" id="GO:0003735">
    <property type="term" value="F:structural constituent of ribosome"/>
    <property type="evidence" value="ECO:0007669"/>
    <property type="project" value="InterPro"/>
</dbReference>
<dbReference type="GO" id="GO:0006412">
    <property type="term" value="P:translation"/>
    <property type="evidence" value="ECO:0007669"/>
    <property type="project" value="UniProtKB-UniRule"/>
</dbReference>
<dbReference type="Gene3D" id="3.30.70.330">
    <property type="match status" value="1"/>
</dbReference>
<dbReference type="HAMAP" id="MF_01369_B">
    <property type="entry name" value="Ribosomal_uL23_B"/>
    <property type="match status" value="1"/>
</dbReference>
<dbReference type="InterPro" id="IPR012677">
    <property type="entry name" value="Nucleotide-bd_a/b_plait_sf"/>
</dbReference>
<dbReference type="InterPro" id="IPR013025">
    <property type="entry name" value="Ribosomal_uL23-like"/>
</dbReference>
<dbReference type="InterPro" id="IPR012678">
    <property type="entry name" value="Ribosomal_uL23/eL15/eS24_sf"/>
</dbReference>
<dbReference type="InterPro" id="IPR001014">
    <property type="entry name" value="Ribosomal_uL23_CS"/>
</dbReference>
<dbReference type="PANTHER" id="PTHR11620">
    <property type="entry name" value="60S RIBOSOMAL PROTEIN L23A"/>
    <property type="match status" value="1"/>
</dbReference>
<dbReference type="Pfam" id="PF00276">
    <property type="entry name" value="Ribosomal_L23"/>
    <property type="match status" value="1"/>
</dbReference>
<dbReference type="SUPFAM" id="SSF54189">
    <property type="entry name" value="Ribosomal proteins S24e, L23 and L15e"/>
    <property type="match status" value="1"/>
</dbReference>
<dbReference type="PROSITE" id="PS00050">
    <property type="entry name" value="RIBOSOMAL_L23"/>
    <property type="match status" value="1"/>
</dbReference>
<gene>
    <name type="primary">rpl23</name>
</gene>
<evidence type="ECO:0000250" key="1"/>
<evidence type="ECO:0000305" key="2"/>
<organism>
    <name type="scientific">Huperzia lucidula</name>
    <name type="common">Shining clubmoss</name>
    <name type="synonym">Lycopodium lucidulum</name>
    <dbReference type="NCBI Taxonomy" id="37429"/>
    <lineage>
        <taxon>Eukaryota</taxon>
        <taxon>Viridiplantae</taxon>
        <taxon>Streptophyta</taxon>
        <taxon>Embryophyta</taxon>
        <taxon>Tracheophyta</taxon>
        <taxon>Lycopodiopsida</taxon>
        <taxon>Lycopodiales</taxon>
        <taxon>Lycopodiaceae</taxon>
        <taxon>Huperzioideae</taxon>
        <taxon>Huperzia</taxon>
    </lineage>
</organism>
<feature type="chain" id="PRO_0000272904" description="Large ribosomal subunit protein uL23c">
    <location>
        <begin position="1"/>
        <end position="91"/>
    </location>
</feature>
<protein>
    <recommendedName>
        <fullName evidence="2">Large ribosomal subunit protein uL23c</fullName>
    </recommendedName>
    <alternativeName>
        <fullName>50S ribosomal protein L23, chloroplastic</fullName>
    </alternativeName>
</protein>
<proteinExistence type="inferred from homology"/>
<keyword id="KW-0150">Chloroplast</keyword>
<keyword id="KW-0934">Plastid</keyword>
<keyword id="KW-0687">Ribonucleoprotein</keyword>
<keyword id="KW-0689">Ribosomal protein</keyword>
<keyword id="KW-0694">RNA-binding</keyword>
<keyword id="KW-0699">rRNA-binding</keyword>
<accession>Q5SD14</accession>
<comment type="function">
    <text evidence="1">Binds to 23S rRNA.</text>
</comment>
<comment type="subunit">
    <text evidence="1">Part of the 50S ribosomal subunit.</text>
</comment>
<comment type="subcellular location">
    <subcellularLocation>
        <location>Plastid</location>
        <location>Chloroplast</location>
    </subcellularLocation>
</comment>
<comment type="similarity">
    <text evidence="2">Belongs to the universal ribosomal protein uL23 family.</text>
</comment>
<sequence length="91" mass="10734">MDKVKKPVLTEKTIRLLEKKQYSFDVDLKSNKTEVKHWIEKFFNVEVRAMNSHRPPGKKKYAGSIVTHSVRYKRMIITLKPGYSIPLFPNE</sequence>
<geneLocation type="chloroplast"/>
<name>RK23_HUPLU</name>